<accession>P53067</accession>
<accession>D6VV94</accession>
<name>IMB5_YEAST</name>
<protein>
    <recommendedName>
        <fullName>Importin subunit beta-5</fullName>
    </recommendedName>
    <alternativeName>
        <fullName>114 kDa karyopherin</fullName>
    </alternativeName>
    <alternativeName>
        <fullName>Karyopherin subunit beta-5</fullName>
    </alternativeName>
    <alternativeName>
        <fullName>Karyopherin-114</fullName>
    </alternativeName>
</protein>
<reference key="1">
    <citation type="journal article" date="1995" name="Yeast">
        <title>The sequence of an 11.1 kb DNA fragment between ADH4 and ADE5 on the left arm of chromosome VII, reveals the presence of eight open reading frames.</title>
        <authorList>
            <person name="Vandenbol M."/>
            <person name="Durand P."/>
            <person name="Portetelle D."/>
            <person name="Hilger F."/>
        </authorList>
    </citation>
    <scope>NUCLEOTIDE SEQUENCE [GENOMIC DNA]</scope>
    <source>
        <strain>ATCC 204508 / S288c</strain>
    </source>
</reference>
<reference key="2">
    <citation type="journal article" date="1997" name="Nature">
        <title>The nucleotide sequence of Saccharomyces cerevisiae chromosome VII.</title>
        <authorList>
            <person name="Tettelin H."/>
            <person name="Agostoni-Carbone M.L."/>
            <person name="Albermann K."/>
            <person name="Albers M."/>
            <person name="Arroyo J."/>
            <person name="Backes U."/>
            <person name="Barreiros T."/>
            <person name="Bertani I."/>
            <person name="Bjourson A.J."/>
            <person name="Brueckner M."/>
            <person name="Bruschi C.V."/>
            <person name="Carignani G."/>
            <person name="Castagnoli L."/>
            <person name="Cerdan E."/>
            <person name="Clemente M.L."/>
            <person name="Coblenz A."/>
            <person name="Coglievina M."/>
            <person name="Coissac E."/>
            <person name="Defoor E."/>
            <person name="Del Bino S."/>
            <person name="Delius H."/>
            <person name="Delneri D."/>
            <person name="de Wergifosse P."/>
            <person name="Dujon B."/>
            <person name="Durand P."/>
            <person name="Entian K.-D."/>
            <person name="Eraso P."/>
            <person name="Escribano V."/>
            <person name="Fabiani L."/>
            <person name="Fartmann B."/>
            <person name="Feroli F."/>
            <person name="Feuermann M."/>
            <person name="Frontali L."/>
            <person name="Garcia-Gonzalez M."/>
            <person name="Garcia-Saez M.I."/>
            <person name="Goffeau A."/>
            <person name="Guerreiro P."/>
            <person name="Hani J."/>
            <person name="Hansen M."/>
            <person name="Hebling U."/>
            <person name="Hernandez K."/>
            <person name="Heumann K."/>
            <person name="Hilger F."/>
            <person name="Hofmann B."/>
            <person name="Indge K.J."/>
            <person name="James C.M."/>
            <person name="Klima R."/>
            <person name="Koetter P."/>
            <person name="Kramer B."/>
            <person name="Kramer W."/>
            <person name="Lauquin G."/>
            <person name="Leuther H."/>
            <person name="Louis E.J."/>
            <person name="Maillier E."/>
            <person name="Marconi A."/>
            <person name="Martegani E."/>
            <person name="Mazon M.J."/>
            <person name="Mazzoni C."/>
            <person name="McReynolds A.D.K."/>
            <person name="Melchioretto P."/>
            <person name="Mewes H.-W."/>
            <person name="Minenkova O."/>
            <person name="Mueller-Auer S."/>
            <person name="Nawrocki A."/>
            <person name="Netter P."/>
            <person name="Neu R."/>
            <person name="Nombela C."/>
            <person name="Oliver S.G."/>
            <person name="Panzeri L."/>
            <person name="Paoluzi S."/>
            <person name="Plevani P."/>
            <person name="Portetelle D."/>
            <person name="Portillo F."/>
            <person name="Potier S."/>
            <person name="Purnelle B."/>
            <person name="Rieger M."/>
            <person name="Riles L."/>
            <person name="Rinaldi T."/>
            <person name="Robben J."/>
            <person name="Rodrigues-Pousada C."/>
            <person name="Rodriguez-Belmonte E."/>
            <person name="Rodriguez-Torres A.M."/>
            <person name="Rose M."/>
            <person name="Ruzzi M."/>
            <person name="Saliola M."/>
            <person name="Sanchez-Perez M."/>
            <person name="Schaefer B."/>
            <person name="Schaefer M."/>
            <person name="Scharfe M."/>
            <person name="Schmidheini T."/>
            <person name="Schreer A."/>
            <person name="Skala J."/>
            <person name="Souciet J.-L."/>
            <person name="Steensma H.Y."/>
            <person name="Talla E."/>
            <person name="Thierry A."/>
            <person name="Vandenbol M."/>
            <person name="van der Aart Q.J.M."/>
            <person name="Van Dyck L."/>
            <person name="Vanoni M."/>
            <person name="Verhasselt P."/>
            <person name="Voet M."/>
            <person name="Volckaert G."/>
            <person name="Wambutt R."/>
            <person name="Watson M.D."/>
            <person name="Weber N."/>
            <person name="Wedler E."/>
            <person name="Wedler H."/>
            <person name="Wipfli P."/>
            <person name="Wolf K."/>
            <person name="Wright L.F."/>
            <person name="Zaccaria P."/>
            <person name="Zimmermann M."/>
            <person name="Zollner A."/>
            <person name="Kleine K."/>
        </authorList>
    </citation>
    <scope>NUCLEOTIDE SEQUENCE [LARGE SCALE GENOMIC DNA]</scope>
    <source>
        <strain>ATCC 204508 / S288c</strain>
    </source>
</reference>
<reference key="3">
    <citation type="journal article" date="2014" name="G3 (Bethesda)">
        <title>The reference genome sequence of Saccharomyces cerevisiae: Then and now.</title>
        <authorList>
            <person name="Engel S.R."/>
            <person name="Dietrich F.S."/>
            <person name="Fisk D.G."/>
            <person name="Binkley G."/>
            <person name="Balakrishnan R."/>
            <person name="Costanzo M.C."/>
            <person name="Dwight S.S."/>
            <person name="Hitz B.C."/>
            <person name="Karra K."/>
            <person name="Nash R.S."/>
            <person name="Weng S."/>
            <person name="Wong E.D."/>
            <person name="Lloyd P."/>
            <person name="Skrzypek M.S."/>
            <person name="Miyasato S.R."/>
            <person name="Simison M."/>
            <person name="Cherry J.M."/>
        </authorList>
    </citation>
    <scope>GENOME REANNOTATION</scope>
    <source>
        <strain>ATCC 204508 / S288c</strain>
    </source>
</reference>
<reference key="4">
    <citation type="journal article" date="1999" name="Proc. Natl. Acad. Sci. U.S.A.">
        <title>The importin/karyopherin Kap114 mediates the nuclear import of TATA-binding protein.</title>
        <authorList>
            <person name="Morehouse H."/>
            <person name="Buratowski R.M."/>
            <person name="Silver P.A."/>
            <person name="Buratowski S."/>
        </authorList>
    </citation>
    <scope>FUNCTION IN TBP IMPORT</scope>
</reference>
<reference key="5">
    <citation type="journal article" date="2001" name="J. Cell Biol.">
        <title>Nuclear import of histone H2A and H2B is mediated by a network of karyopherins.</title>
        <authorList>
            <person name="Mosammaparast N."/>
            <person name="Jackson K.R."/>
            <person name="Guo Y."/>
            <person name="Brame C.J."/>
            <person name="Shabanowitz J."/>
            <person name="Hunt D.F."/>
            <person name="Pemberton L.F."/>
        </authorList>
    </citation>
    <scope>FUNCTION IN HISTONE H2A/H2B IMPORT</scope>
</reference>
<reference key="6">
    <citation type="journal article" date="2003" name="Nature">
        <title>Global analysis of protein localization in budding yeast.</title>
        <authorList>
            <person name="Huh W.-K."/>
            <person name="Falvo J.V."/>
            <person name="Gerke L.C."/>
            <person name="Carroll A.S."/>
            <person name="Howson R.W."/>
            <person name="Weissman J.S."/>
            <person name="O'Shea E.K."/>
        </authorList>
    </citation>
    <scope>SUBCELLULAR LOCATION [LARGE SCALE ANALYSIS]</scope>
</reference>
<reference key="7">
    <citation type="journal article" date="2003" name="Nature">
        <title>Global analysis of protein expression in yeast.</title>
        <authorList>
            <person name="Ghaemmaghami S."/>
            <person name="Huh W.-K."/>
            <person name="Bower K."/>
            <person name="Howson R.W."/>
            <person name="Belle A."/>
            <person name="Dephoure N."/>
            <person name="O'Shea E.K."/>
            <person name="Weissman J.S."/>
        </authorList>
    </citation>
    <scope>LEVEL OF PROTEIN EXPRESSION [LARGE SCALE ANALYSIS]</scope>
</reference>
<reference key="8">
    <citation type="journal article" date="2008" name="Mol. Cell. Biol.">
        <title>Phosphorylation by casein kinase 2 regulates Nap1 localization and function.</title>
        <authorList>
            <person name="Calvert M.E.K."/>
            <person name="Keck K.M."/>
            <person name="Ptak C."/>
            <person name="Shabanowitz J."/>
            <person name="Hunt D.F."/>
            <person name="Pemberton L.F."/>
        </authorList>
    </citation>
    <scope>INTERACTION WITH NAP1</scope>
    <scope>IDENTIFICATION BY MASS SPECTROMETRY</scope>
</reference>
<reference key="9">
    <citation type="journal article" date="2012" name="Proc. Natl. Acad. Sci. U.S.A.">
        <title>N-terminal acetylome analyses and functional insights of the N-terminal acetyltransferase NatB.</title>
        <authorList>
            <person name="Van Damme P."/>
            <person name="Lasa M."/>
            <person name="Polevoda B."/>
            <person name="Gazquez C."/>
            <person name="Elosegui-Artola A."/>
            <person name="Kim D.S."/>
            <person name="De Juan-Pardo E."/>
            <person name="Demeyer K."/>
            <person name="Hole K."/>
            <person name="Larrea E."/>
            <person name="Timmerman E."/>
            <person name="Prieto J."/>
            <person name="Arnesen T."/>
            <person name="Sherman F."/>
            <person name="Gevaert K."/>
            <person name="Aldabe R."/>
        </authorList>
    </citation>
    <scope>ACETYLATION [LARGE SCALE ANALYSIS] AT MET-1</scope>
    <scope>IDENTIFICATION BY MASS SPECTROMETRY [LARGE SCALE ANALYSIS]</scope>
</reference>
<dbReference type="EMBL" id="Z49149">
    <property type="protein sequence ID" value="CAA89014.1"/>
    <property type="molecule type" value="Genomic_DNA"/>
</dbReference>
<dbReference type="EMBL" id="Z72763">
    <property type="protein sequence ID" value="CAA96960.1"/>
    <property type="molecule type" value="Genomic_DNA"/>
</dbReference>
<dbReference type="EMBL" id="BK006941">
    <property type="protein sequence ID" value="DAA07878.1"/>
    <property type="molecule type" value="Genomic_DNA"/>
</dbReference>
<dbReference type="PIR" id="S53939">
    <property type="entry name" value="S53939"/>
</dbReference>
<dbReference type="RefSeq" id="NP_011273.1">
    <property type="nucleotide sequence ID" value="NM_001181107.1"/>
</dbReference>
<dbReference type="PDB" id="6AHO">
    <property type="method" value="X-ray"/>
    <property type="resolution" value="2.50 A"/>
    <property type="chains" value="A=1-1004"/>
</dbReference>
<dbReference type="PDB" id="8F0X">
    <property type="method" value="EM"/>
    <property type="resolution" value="3.21 A"/>
    <property type="chains" value="A=1-1004"/>
</dbReference>
<dbReference type="PDB" id="8F19">
    <property type="method" value="EM"/>
    <property type="resolution" value="3.49 A"/>
    <property type="chains" value="A=1-1004"/>
</dbReference>
<dbReference type="PDB" id="8F1E">
    <property type="method" value="EM"/>
    <property type="resolution" value="3.28 A"/>
    <property type="chains" value="A=1-1004"/>
</dbReference>
<dbReference type="PDB" id="8H5B">
    <property type="method" value="EM"/>
    <property type="resolution" value="4.03 A"/>
    <property type="chains" value="A=1-1004"/>
</dbReference>
<dbReference type="PDB" id="9B31">
    <property type="method" value="EM"/>
    <property type="resolution" value="3.20 A"/>
    <property type="chains" value="A=1-1004"/>
</dbReference>
<dbReference type="PDB" id="9B3F">
    <property type="method" value="EM"/>
    <property type="resolution" value="3.54 A"/>
    <property type="chains" value="A=1-1004"/>
</dbReference>
<dbReference type="PDB" id="9B3I">
    <property type="method" value="EM"/>
    <property type="resolution" value="2.88 A"/>
    <property type="chains" value="A=1-1004"/>
</dbReference>
<dbReference type="PDBsum" id="6AHO"/>
<dbReference type="PDBsum" id="8F0X"/>
<dbReference type="PDBsum" id="8F19"/>
<dbReference type="PDBsum" id="8F1E"/>
<dbReference type="PDBsum" id="8H5B"/>
<dbReference type="PDBsum" id="9B31"/>
<dbReference type="PDBsum" id="9B3F"/>
<dbReference type="PDBsum" id="9B3I"/>
<dbReference type="EMDB" id="EMD-28782"/>
<dbReference type="EMDB" id="EMD-28788"/>
<dbReference type="EMDB" id="EMD-28796"/>
<dbReference type="EMDB" id="EMD-34490"/>
<dbReference type="SMR" id="P53067"/>
<dbReference type="BioGRID" id="32999">
    <property type="interactions" value="114"/>
</dbReference>
<dbReference type="DIP" id="DIP-5881N"/>
<dbReference type="FunCoup" id="P53067">
    <property type="interactions" value="1299"/>
</dbReference>
<dbReference type="IntAct" id="P53067">
    <property type="interactions" value="25"/>
</dbReference>
<dbReference type="MINT" id="P53067"/>
<dbReference type="STRING" id="4932.YGL241W"/>
<dbReference type="iPTMnet" id="P53067"/>
<dbReference type="PaxDb" id="4932-YGL241W"/>
<dbReference type="PeptideAtlas" id="P53067"/>
<dbReference type="EnsemblFungi" id="YGL241W_mRNA">
    <property type="protein sequence ID" value="YGL241W"/>
    <property type="gene ID" value="YGL241W"/>
</dbReference>
<dbReference type="GeneID" id="852610"/>
<dbReference type="KEGG" id="sce:YGL241W"/>
<dbReference type="AGR" id="SGD:S000003210"/>
<dbReference type="SGD" id="S000003210">
    <property type="gene designation" value="KAP114"/>
</dbReference>
<dbReference type="VEuPathDB" id="FungiDB:YGL241W"/>
<dbReference type="eggNOG" id="KOG2274">
    <property type="taxonomic scope" value="Eukaryota"/>
</dbReference>
<dbReference type="GeneTree" id="ENSGT00390000008224"/>
<dbReference type="HOGENOM" id="CLU_008920_1_1_1"/>
<dbReference type="InParanoid" id="P53067"/>
<dbReference type="OMA" id="NPDQYTI"/>
<dbReference type="OrthoDB" id="431626at2759"/>
<dbReference type="BioCyc" id="YEAST:G3O-30713-MONOMER"/>
<dbReference type="BioGRID-ORCS" id="852610">
    <property type="hits" value="0 hits in 10 CRISPR screens"/>
</dbReference>
<dbReference type="PRO" id="PR:P53067"/>
<dbReference type="Proteomes" id="UP000002311">
    <property type="component" value="Chromosome VII"/>
</dbReference>
<dbReference type="RNAct" id="P53067">
    <property type="molecule type" value="protein"/>
</dbReference>
<dbReference type="GO" id="GO:0005737">
    <property type="term" value="C:cytoplasm"/>
    <property type="evidence" value="ECO:0000314"/>
    <property type="project" value="SGD"/>
</dbReference>
<dbReference type="GO" id="GO:0005829">
    <property type="term" value="C:cytosol"/>
    <property type="evidence" value="ECO:0000318"/>
    <property type="project" value="GO_Central"/>
</dbReference>
<dbReference type="GO" id="GO:0005635">
    <property type="term" value="C:nuclear envelope"/>
    <property type="evidence" value="ECO:0000318"/>
    <property type="project" value="GO_Central"/>
</dbReference>
<dbReference type="GO" id="GO:0005643">
    <property type="term" value="C:nuclear pore"/>
    <property type="evidence" value="ECO:0007669"/>
    <property type="project" value="UniProtKB-SubCell"/>
</dbReference>
<dbReference type="GO" id="GO:0005634">
    <property type="term" value="C:nucleus"/>
    <property type="evidence" value="ECO:0000314"/>
    <property type="project" value="SGD"/>
</dbReference>
<dbReference type="GO" id="GO:0061608">
    <property type="term" value="F:nuclear import signal receptor activity"/>
    <property type="evidence" value="ECO:0000315"/>
    <property type="project" value="SGD"/>
</dbReference>
<dbReference type="GO" id="GO:0031267">
    <property type="term" value="F:small GTPase binding"/>
    <property type="evidence" value="ECO:0007669"/>
    <property type="project" value="InterPro"/>
</dbReference>
<dbReference type="GO" id="GO:0051028">
    <property type="term" value="P:mRNA transport"/>
    <property type="evidence" value="ECO:0007669"/>
    <property type="project" value="UniProtKB-KW"/>
</dbReference>
<dbReference type="GO" id="GO:0006607">
    <property type="term" value="P:NLS-bearing protein import into nucleus"/>
    <property type="evidence" value="ECO:0000315"/>
    <property type="project" value="SGD"/>
</dbReference>
<dbReference type="GO" id="GO:0006606">
    <property type="term" value="P:protein import into nucleus"/>
    <property type="evidence" value="ECO:0000314"/>
    <property type="project" value="SGD"/>
</dbReference>
<dbReference type="FunFam" id="1.25.10.10:FF:000769">
    <property type="entry name" value="Importin beta-5 subunit"/>
    <property type="match status" value="1"/>
</dbReference>
<dbReference type="Gene3D" id="1.25.10.10">
    <property type="entry name" value="Leucine-rich Repeat Variant"/>
    <property type="match status" value="1"/>
</dbReference>
<dbReference type="InterPro" id="IPR011989">
    <property type="entry name" value="ARM-like"/>
</dbReference>
<dbReference type="InterPro" id="IPR016024">
    <property type="entry name" value="ARM-type_fold"/>
</dbReference>
<dbReference type="InterPro" id="IPR056840">
    <property type="entry name" value="HEAT_IPO9_central"/>
</dbReference>
<dbReference type="InterPro" id="IPR001494">
    <property type="entry name" value="Importin-beta_N"/>
</dbReference>
<dbReference type="PANTHER" id="PTHR10997">
    <property type="entry name" value="IMPORTIN-7, 8, 11"/>
    <property type="match status" value="1"/>
</dbReference>
<dbReference type="PANTHER" id="PTHR10997:SF9">
    <property type="entry name" value="IMPORTIN-9"/>
    <property type="match status" value="1"/>
</dbReference>
<dbReference type="Pfam" id="PF25018">
    <property type="entry name" value="HEAT_IPO9_c"/>
    <property type="match status" value="1"/>
</dbReference>
<dbReference type="Pfam" id="PF03810">
    <property type="entry name" value="IBN_N"/>
    <property type="match status" value="1"/>
</dbReference>
<dbReference type="SMART" id="SM00913">
    <property type="entry name" value="IBN_N"/>
    <property type="match status" value="1"/>
</dbReference>
<dbReference type="SUPFAM" id="SSF48371">
    <property type="entry name" value="ARM repeat"/>
    <property type="match status" value="1"/>
</dbReference>
<dbReference type="PROSITE" id="PS50166">
    <property type="entry name" value="IMPORTIN_B_NT"/>
    <property type="match status" value="1"/>
</dbReference>
<proteinExistence type="evidence at protein level"/>
<comment type="function">
    <text evidence="2 3">Required for nuclear protein import and mediates docking of import substrate to distinct nucleoporins. Serves a receptor for nuclear localization signals. Mediates the nuclear import of TATA-binding protein (TBP) and of histones H2A and H2B.</text>
</comment>
<comment type="subunit">
    <text evidence="6">Interacts with NAP1.</text>
</comment>
<comment type="interaction">
    <interactant intactId="EBI-9174">
        <id>P53067</id>
    </interactant>
    <interactant intactId="EBI-7926">
        <id>P32835</id>
        <label>GSP1</label>
    </interactant>
    <organismsDiffer>false</organismsDiffer>
    <experiments>3</experiments>
</comment>
<comment type="interaction">
    <interactant intactId="EBI-9174">
        <id>P53067</id>
    </interactant>
    <interactant intactId="EBI-11017">
        <id>P38632</id>
        <label>MMS21</label>
    </interactant>
    <organismsDiffer>false</organismsDiffer>
    <experiments>2</experiments>
</comment>
<comment type="interaction">
    <interactant intactId="EBI-9174">
        <id>P53067</id>
    </interactant>
    <interactant intactId="EBI-11850">
        <id>P25293</id>
        <label>NAP1</label>
    </interactant>
    <organismsDiffer>false</organismsDiffer>
    <experiments>2</experiments>
</comment>
<comment type="subcellular location">
    <subcellularLocation>
        <location evidence="4">Cytoplasm</location>
    </subcellularLocation>
    <subcellularLocation>
        <location evidence="4">Nucleus</location>
        <location evidence="4">Nuclear pore complex</location>
    </subcellularLocation>
</comment>
<comment type="miscellaneous">
    <text evidence="5">Present with 2940 molecules/cell in log phase SD medium.</text>
</comment>
<comment type="similarity">
    <text evidence="7">Belongs to the importin beta family.</text>
</comment>
<gene>
    <name type="primary">KAP114</name>
    <name type="ordered locus">YGL241W</name>
    <name type="ORF">HRC1004</name>
</gene>
<keyword id="KW-0002">3D-structure</keyword>
<keyword id="KW-0007">Acetylation</keyword>
<keyword id="KW-0963">Cytoplasm</keyword>
<keyword id="KW-0509">mRNA transport</keyword>
<keyword id="KW-0906">Nuclear pore complex</keyword>
<keyword id="KW-0539">Nucleus</keyword>
<keyword id="KW-0653">Protein transport</keyword>
<keyword id="KW-1185">Reference proteome</keyword>
<keyword id="KW-0811">Translocation</keyword>
<keyword id="KW-0813">Transport</keyword>
<organism>
    <name type="scientific">Saccharomyces cerevisiae (strain ATCC 204508 / S288c)</name>
    <name type="common">Baker's yeast</name>
    <dbReference type="NCBI Taxonomy" id="559292"/>
    <lineage>
        <taxon>Eukaryota</taxon>
        <taxon>Fungi</taxon>
        <taxon>Dikarya</taxon>
        <taxon>Ascomycota</taxon>
        <taxon>Saccharomycotina</taxon>
        <taxon>Saccharomycetes</taxon>
        <taxon>Saccharomycetales</taxon>
        <taxon>Saccharomycetaceae</taxon>
        <taxon>Saccharomyces</taxon>
    </lineage>
</organism>
<evidence type="ECO:0000255" key="1">
    <source>
        <dbReference type="PROSITE-ProRule" id="PRU00115"/>
    </source>
</evidence>
<evidence type="ECO:0000269" key="2">
    <source>
    </source>
</evidence>
<evidence type="ECO:0000269" key="3">
    <source>
    </source>
</evidence>
<evidence type="ECO:0000269" key="4">
    <source>
    </source>
</evidence>
<evidence type="ECO:0000269" key="5">
    <source>
    </source>
</evidence>
<evidence type="ECO:0000269" key="6">
    <source>
    </source>
</evidence>
<evidence type="ECO:0000305" key="7"/>
<evidence type="ECO:0007744" key="8">
    <source>
    </source>
</evidence>
<evidence type="ECO:0007829" key="9">
    <source>
        <dbReference type="PDB" id="6AHO"/>
    </source>
</evidence>
<evidence type="ECO:0007829" key="10">
    <source>
        <dbReference type="PDB" id="8F0X"/>
    </source>
</evidence>
<evidence type="ECO:0007829" key="11">
    <source>
        <dbReference type="PDB" id="8F19"/>
    </source>
</evidence>
<evidence type="ECO:0007829" key="12">
    <source>
        <dbReference type="PDB" id="9B31"/>
    </source>
</evidence>
<evidence type="ECO:0007829" key="13">
    <source>
        <dbReference type="PDB" id="9B3I"/>
    </source>
</evidence>
<sequence length="1004" mass="113921">MDINELIIGAQSADKHTREVAETQLLQWCDSDASQVFKALANVALQHEASLESRQFALLSLRKLITMYWSPGFESYRSTSNVEIDVKDFIREVLLKLCLNDNENTKIKNGASYCIVQISAVDFPDQWPQLLTVIYDAISHQHSLNAMSLLNEIYDDVVSEEMFFEGGIGLATMEIVFKVLNTETSTLIAKIAALKLLKACLLQMSSHNEYDEASRKSFVSQCLATSLQILGQLLTLNFGNVDVISQLKFKSIIYENLVFIKNDFSRKHFSSELQKQFKIMAIQDLENVTHINANVETTESEPLLETVHDCSIYIVEFLTSVCTLQFSVEEMNKIITSLTILCQLSSETREIWTSDFNTFVSKETGLAASYNVRDQANEFFTSLPNPQLSLIFKVVSNDIEHSTCNYSTLESLLYLLQCILLNDDEITGENIDQSLQILIKTLENILVSQEIPELILARAILTIPRVLDKFIDALPDIKPLTSAFLAKSLNLALKSDKELIKSATLIAFTYYCYFAELDSVLGPEVCSETQEKVIRIINQVSSDAEEDTNGALMEVLSQVISYNPKEPHSRKEILQAEFHLVFTISSEDPANVQVVVQSQECLEKLLDNINMDNYKNYIELCLPSFINVLDSNNANNYRYSPLLSLVLEFITVFLKKKPNDGFLPDEINQYLFEPLAKVLAFSTEDETLQLATEAFSYLIFNTDTRAMEPRLMDIMKVLERLLSLEVSDSAAMNVGPLVVAIFTRFSKEIQPLIGRILEAVVVRLIKTQNISTEQNLLSVLCFLTCNDPKQTVDFLSSFQIDNTDALTLVMRKWIEAFEVIRGEKRIKENIVALSNLFFLNDKRLQKVVVNGNLIPYEGDLIITRSMAKKMPDRYVQVPLYTKIIKLFVSELSFQSKQPNPEQLITSDIKQEVVNANKDDDNDDWEDVDDVLDYDKLKEYIDDDVDEEADDDSDDITGLMDVKESVVQLLVRFFKEVASKDVSGFHCIYETLSDSERKVLSEALL</sequence>
<feature type="chain" id="PRO_0000120778" description="Importin subunit beta-5">
    <location>
        <begin position="1"/>
        <end position="1004"/>
    </location>
</feature>
<feature type="domain" description="Importin N-terminal" evidence="1">
    <location>
        <begin position="21"/>
        <end position="100"/>
    </location>
</feature>
<feature type="modified residue" description="N-acetylmethionine" evidence="8">
    <location>
        <position position="1"/>
    </location>
</feature>
<feature type="helix" evidence="9">
    <location>
        <begin position="3"/>
        <end position="8"/>
    </location>
</feature>
<feature type="strand" evidence="12">
    <location>
        <begin position="12"/>
        <end position="14"/>
    </location>
</feature>
<feature type="helix" evidence="9">
    <location>
        <begin position="16"/>
        <end position="31"/>
    </location>
</feature>
<feature type="helix" evidence="9">
    <location>
        <begin position="34"/>
        <end position="45"/>
    </location>
</feature>
<feature type="strand" evidence="9">
    <location>
        <begin position="47"/>
        <end position="49"/>
    </location>
</feature>
<feature type="helix" evidence="9">
    <location>
        <begin position="51"/>
        <end position="68"/>
    </location>
</feature>
<feature type="helix" evidence="9">
    <location>
        <begin position="84"/>
        <end position="98"/>
    </location>
</feature>
<feature type="helix" evidence="9">
    <location>
        <begin position="105"/>
        <end position="126"/>
    </location>
</feature>
<feature type="helix" evidence="9">
    <location>
        <begin position="130"/>
        <end position="140"/>
    </location>
</feature>
<feature type="helix" evidence="9">
    <location>
        <begin position="144"/>
        <end position="157"/>
    </location>
</feature>
<feature type="helix" evidence="9">
    <location>
        <begin position="160"/>
        <end position="164"/>
    </location>
</feature>
<feature type="helix" evidence="9">
    <location>
        <begin position="168"/>
        <end position="180"/>
    </location>
</feature>
<feature type="strand" evidence="11">
    <location>
        <begin position="183"/>
        <end position="185"/>
    </location>
</feature>
<feature type="helix" evidence="9">
    <location>
        <begin position="187"/>
        <end position="205"/>
    </location>
</feature>
<feature type="helix" evidence="9">
    <location>
        <begin position="213"/>
        <end position="215"/>
    </location>
</feature>
<feature type="helix" evidence="9">
    <location>
        <begin position="216"/>
        <end position="233"/>
    </location>
</feature>
<feature type="turn" evidence="13">
    <location>
        <begin position="239"/>
        <end position="242"/>
    </location>
</feature>
<feature type="helix" evidence="9">
    <location>
        <begin position="243"/>
        <end position="263"/>
    </location>
</feature>
<feature type="helix" evidence="9">
    <location>
        <begin position="266"/>
        <end position="268"/>
    </location>
</feature>
<feature type="helix" evidence="9">
    <location>
        <begin position="271"/>
        <end position="289"/>
    </location>
</feature>
<feature type="helix" evidence="13">
    <location>
        <begin position="295"/>
        <end position="297"/>
    </location>
</feature>
<feature type="helix" evidence="9">
    <location>
        <begin position="304"/>
        <end position="320"/>
    </location>
</feature>
<feature type="turn" evidence="9">
    <location>
        <begin position="321"/>
        <end position="323"/>
    </location>
</feature>
<feature type="helix" evidence="9">
    <location>
        <begin position="328"/>
        <end position="341"/>
    </location>
</feature>
<feature type="helix" evidence="9">
    <location>
        <begin position="346"/>
        <end position="354"/>
    </location>
</feature>
<feature type="helix" evidence="9">
    <location>
        <begin position="356"/>
        <end position="363"/>
    </location>
</feature>
<feature type="helix" evidence="9">
    <location>
        <begin position="372"/>
        <end position="380"/>
    </location>
</feature>
<feature type="helix" evidence="9">
    <location>
        <begin position="385"/>
        <end position="400"/>
    </location>
</feature>
<feature type="turn" evidence="9">
    <location>
        <begin position="401"/>
        <end position="404"/>
    </location>
</feature>
<feature type="turn" evidence="9">
    <location>
        <begin position="406"/>
        <end position="408"/>
    </location>
</feature>
<feature type="helix" evidence="9">
    <location>
        <begin position="409"/>
        <end position="420"/>
    </location>
</feature>
<feature type="strand" evidence="9">
    <location>
        <begin position="422"/>
        <end position="424"/>
    </location>
</feature>
<feature type="helix" evidence="9">
    <location>
        <begin position="431"/>
        <end position="447"/>
    </location>
</feature>
<feature type="helix" evidence="9">
    <location>
        <begin position="453"/>
        <end position="469"/>
    </location>
</feature>
<feature type="helix" evidence="9">
    <location>
        <begin position="471"/>
        <end position="473"/>
    </location>
</feature>
<feature type="helix" evidence="9">
    <location>
        <begin position="477"/>
        <end position="494"/>
    </location>
</feature>
<feature type="helix" evidence="9">
    <location>
        <begin position="498"/>
        <end position="514"/>
    </location>
</feature>
<feature type="helix" evidence="9">
    <location>
        <begin position="517"/>
        <end position="520"/>
    </location>
</feature>
<feature type="helix" evidence="9">
    <location>
        <begin position="523"/>
        <end position="541"/>
    </location>
</feature>
<feature type="helix" evidence="9">
    <location>
        <begin position="546"/>
        <end position="561"/>
    </location>
</feature>
<feature type="helix" evidence="13">
    <location>
        <begin position="566"/>
        <end position="568"/>
    </location>
</feature>
<feature type="helix" evidence="9">
    <location>
        <begin position="571"/>
        <end position="587"/>
    </location>
</feature>
<feature type="helix" evidence="9">
    <location>
        <begin position="592"/>
        <end position="605"/>
    </location>
</feature>
<feature type="helix" evidence="13">
    <location>
        <begin position="606"/>
        <end position="608"/>
    </location>
</feature>
<feature type="helix" evidence="9">
    <location>
        <begin position="611"/>
        <end position="634"/>
    </location>
</feature>
<feature type="turn" evidence="9">
    <location>
        <begin position="635"/>
        <end position="637"/>
    </location>
</feature>
<feature type="helix" evidence="9">
    <location>
        <begin position="641"/>
        <end position="654"/>
    </location>
</feature>
<feature type="strand" evidence="9">
    <location>
        <begin position="659"/>
        <end position="661"/>
    </location>
</feature>
<feature type="helix" evidence="9">
    <location>
        <begin position="665"/>
        <end position="681"/>
    </location>
</feature>
<feature type="helix" evidence="9">
    <location>
        <begin position="685"/>
        <end position="700"/>
    </location>
</feature>
<feature type="helix" evidence="9">
    <location>
        <begin position="704"/>
        <end position="707"/>
    </location>
</feature>
<feature type="helix" evidence="9">
    <location>
        <begin position="708"/>
        <end position="710"/>
    </location>
</feature>
<feature type="helix" evidence="9">
    <location>
        <begin position="711"/>
        <end position="722"/>
    </location>
</feature>
<feature type="strand" evidence="10">
    <location>
        <begin position="723"/>
        <end position="725"/>
    </location>
</feature>
<feature type="helix" evidence="9">
    <location>
        <begin position="728"/>
        <end position="731"/>
    </location>
</feature>
<feature type="helix" evidence="9">
    <location>
        <begin position="735"/>
        <end position="744"/>
    </location>
</feature>
<feature type="helix" evidence="9">
    <location>
        <begin position="746"/>
        <end position="749"/>
    </location>
</feature>
<feature type="helix" evidence="9">
    <location>
        <begin position="750"/>
        <end position="752"/>
    </location>
</feature>
<feature type="helix" evidence="9">
    <location>
        <begin position="753"/>
        <end position="766"/>
    </location>
</feature>
<feature type="helix" evidence="9">
    <location>
        <begin position="770"/>
        <end position="786"/>
    </location>
</feature>
<feature type="helix" evidence="9">
    <location>
        <begin position="788"/>
        <end position="795"/>
    </location>
</feature>
<feature type="helix" evidence="9">
    <location>
        <begin position="805"/>
        <end position="817"/>
    </location>
</feature>
<feature type="helix" evidence="9">
    <location>
        <begin position="823"/>
        <end position="837"/>
    </location>
</feature>
<feature type="helix" evidence="9">
    <location>
        <begin position="842"/>
        <end position="846"/>
    </location>
</feature>
<feature type="strand" evidence="9">
    <location>
        <begin position="848"/>
        <end position="854"/>
    </location>
</feature>
<feature type="strand" evidence="13">
    <location>
        <begin position="857"/>
        <end position="860"/>
    </location>
</feature>
<feature type="helix" evidence="13">
    <location>
        <begin position="864"/>
        <end position="867"/>
    </location>
</feature>
<feature type="strand" evidence="9">
    <location>
        <begin position="873"/>
        <end position="878"/>
    </location>
</feature>
<feature type="helix" evidence="9">
    <location>
        <begin position="879"/>
        <end position="895"/>
    </location>
</feature>
<feature type="helix" evidence="13">
    <location>
        <begin position="935"/>
        <end position="940"/>
    </location>
</feature>
<feature type="helix" evidence="9">
    <location>
        <begin position="965"/>
        <end position="979"/>
    </location>
</feature>
<feature type="helix" evidence="9">
    <location>
        <begin position="981"/>
        <end position="983"/>
    </location>
</feature>
<feature type="helix" evidence="9">
    <location>
        <begin position="984"/>
        <end position="990"/>
    </location>
</feature>
<feature type="helix" evidence="9">
    <location>
        <begin position="993"/>
        <end position="1002"/>
    </location>
</feature>